<organism>
    <name type="scientific">Panax ginseng</name>
    <name type="common">Korean ginseng</name>
    <dbReference type="NCBI Taxonomy" id="4054"/>
    <lineage>
        <taxon>Eukaryota</taxon>
        <taxon>Viridiplantae</taxon>
        <taxon>Streptophyta</taxon>
        <taxon>Embryophyta</taxon>
        <taxon>Tracheophyta</taxon>
        <taxon>Spermatophyta</taxon>
        <taxon>Magnoliopsida</taxon>
        <taxon>eudicotyledons</taxon>
        <taxon>Gunneridae</taxon>
        <taxon>Pentapetalae</taxon>
        <taxon>asterids</taxon>
        <taxon>campanulids</taxon>
        <taxon>Apiales</taxon>
        <taxon>Araliaceae</taxon>
        <taxon>Panax</taxon>
    </lineage>
</organism>
<geneLocation type="chloroplast"/>
<sequence length="229" mass="26946">MAKKKAFTPLLYLASLVFLPWWISLSFNKSLESWVTNWWNTRQSEIFLNGIQEKNILEKFIELEEILLLEEMIKEYSETHLQNLRIGIHKETIQFIKIHNEDRIHTILHFSTNIICFVILSGYSIWGNEELVILNSWAQEFLYNLSDTIKAFSILLLTDLCIGFHSPHGWELIIGSVYKDFGFVHNDQILSGLVSTFPVILDTLFKFWIFRYLNRVSPSLVVIYHSMND</sequence>
<gene>
    <name evidence="1" type="primary">cemA</name>
    <name type="ORF">PSC0630</name>
</gene>
<feature type="chain" id="PRO_0000216654" description="Potassium/proton antiporter CemA">
    <location>
        <begin position="1"/>
        <end position="229"/>
    </location>
</feature>
<feature type="transmembrane region" description="Helical" evidence="1">
    <location>
        <begin position="7"/>
        <end position="27"/>
    </location>
</feature>
<feature type="transmembrane region" description="Helical" evidence="1">
    <location>
        <begin position="114"/>
        <end position="134"/>
    </location>
</feature>
<feature type="transmembrane region" description="Helical" evidence="1">
    <location>
        <begin position="189"/>
        <end position="209"/>
    </location>
</feature>
<accession>Q68RZ4</accession>
<name>CEMA_PANGI</name>
<dbReference type="EMBL" id="AY582139">
    <property type="protein sequence ID" value="AAT98521.1"/>
    <property type="molecule type" value="Genomic_DNA"/>
</dbReference>
<dbReference type="RefSeq" id="YP_086978.1">
    <property type="nucleotide sequence ID" value="NC_006290.1"/>
</dbReference>
<dbReference type="SMR" id="Q68RZ4"/>
<dbReference type="GeneID" id="3021579"/>
<dbReference type="GO" id="GO:0009706">
    <property type="term" value="C:chloroplast inner membrane"/>
    <property type="evidence" value="ECO:0007669"/>
    <property type="project" value="UniProtKB-SubCell"/>
</dbReference>
<dbReference type="GO" id="GO:0015297">
    <property type="term" value="F:antiporter activity"/>
    <property type="evidence" value="ECO:0007669"/>
    <property type="project" value="UniProtKB-KW"/>
</dbReference>
<dbReference type="GO" id="GO:0015078">
    <property type="term" value="F:proton transmembrane transporter activity"/>
    <property type="evidence" value="ECO:0007669"/>
    <property type="project" value="UniProtKB-UniRule"/>
</dbReference>
<dbReference type="GO" id="GO:0006813">
    <property type="term" value="P:potassium ion transport"/>
    <property type="evidence" value="ECO:0007669"/>
    <property type="project" value="UniProtKB-UniRule"/>
</dbReference>
<dbReference type="HAMAP" id="MF_01308">
    <property type="entry name" value="CemA_PxcA"/>
    <property type="match status" value="1"/>
</dbReference>
<dbReference type="InterPro" id="IPR004282">
    <property type="entry name" value="CemA"/>
</dbReference>
<dbReference type="PANTHER" id="PTHR33650:SF2">
    <property type="entry name" value="CHLOROPLAST ENVELOPE MEMBRANE PROTEIN"/>
    <property type="match status" value="1"/>
</dbReference>
<dbReference type="PANTHER" id="PTHR33650">
    <property type="entry name" value="CHLOROPLAST ENVELOPE MEMBRANE PROTEIN-RELATED"/>
    <property type="match status" value="1"/>
</dbReference>
<dbReference type="Pfam" id="PF03040">
    <property type="entry name" value="CemA"/>
    <property type="match status" value="1"/>
</dbReference>
<proteinExistence type="inferred from homology"/>
<reference key="1">
    <citation type="journal article" date="2004" name="DNA Res.">
        <title>Complete chloroplast genome sequence from Korea ginseng (Panax schinseng Nees) and comparative analysis of sequence evolution among 17 vascular plants.</title>
        <authorList>
            <person name="Kim K.-J."/>
            <person name="Lee H.-L."/>
        </authorList>
    </citation>
    <scope>NUCLEOTIDE SEQUENCE [LARGE SCALE GENOMIC DNA]</scope>
</reference>
<evidence type="ECO:0000255" key="1">
    <source>
        <dbReference type="HAMAP-Rule" id="MF_01308"/>
    </source>
</evidence>
<evidence type="ECO:0000305" key="2"/>
<comment type="function">
    <text evidence="1">Contributes to K(+)/H(+) antiport activity by supporting proton efflux to control proton extrusion and homeostasis in chloroplasts in a light-dependent manner to modulate photosynthesis. Prevents excessive induction of non-photochemical quenching (NPQ) under continuous-light conditions. Indirectly promotes efficient inorganic carbon uptake into chloroplasts.</text>
</comment>
<comment type="catalytic activity">
    <reaction evidence="1">
        <text>K(+)(in) + H(+)(out) = K(+)(out) + H(+)(in)</text>
        <dbReference type="Rhea" id="RHEA:29467"/>
        <dbReference type="ChEBI" id="CHEBI:15378"/>
        <dbReference type="ChEBI" id="CHEBI:29103"/>
    </reaction>
</comment>
<comment type="subcellular location">
    <subcellularLocation>
        <location evidence="1">Plastid</location>
        <location evidence="1">Chloroplast inner membrane</location>
        <topology evidence="1">Multi-pass membrane protein</topology>
    </subcellularLocation>
</comment>
<comment type="similarity">
    <text evidence="1 2">Belongs to the CemA family.</text>
</comment>
<protein>
    <recommendedName>
        <fullName evidence="1">Potassium/proton antiporter CemA</fullName>
    </recommendedName>
    <alternativeName>
        <fullName evidence="1">Chloroplast envelope membrane protein A</fullName>
        <shortName evidence="1">CemA</shortName>
    </alternativeName>
</protein>
<keyword id="KW-0050">Antiport</keyword>
<keyword id="KW-0150">Chloroplast</keyword>
<keyword id="KW-0375">Hydrogen ion transport</keyword>
<keyword id="KW-0406">Ion transport</keyword>
<keyword id="KW-0472">Membrane</keyword>
<keyword id="KW-0934">Plastid</keyword>
<keyword id="KW-1001">Plastid inner membrane</keyword>
<keyword id="KW-0630">Potassium</keyword>
<keyword id="KW-0633">Potassium transport</keyword>
<keyword id="KW-0812">Transmembrane</keyword>
<keyword id="KW-1133">Transmembrane helix</keyword>
<keyword id="KW-0813">Transport</keyword>